<feature type="chain" id="PRO_0000085672" description="Mitotic checkpoint serine/threonine-protein kinase BUB1">
    <location>
        <begin position="1"/>
        <end position="1058"/>
    </location>
</feature>
<feature type="domain" description="BUB1 N-terminal" evidence="5">
    <location>
        <begin position="11"/>
        <end position="182"/>
    </location>
</feature>
<feature type="domain" description="Protein kinase" evidence="4">
    <location>
        <begin position="761"/>
        <end position="1058"/>
    </location>
</feature>
<feature type="region of interest" description="Necessary for kinetochore localization" evidence="1">
    <location>
        <begin position="1"/>
        <end position="146"/>
    </location>
</feature>
<feature type="region of interest" description="Necessary for interaction with KNL1" evidence="1">
    <location>
        <begin position="99"/>
        <end position="132"/>
    </location>
</feature>
<feature type="region of interest" description="Necessary for interaction with BUB3" evidence="1">
    <location>
        <begin position="229"/>
        <end position="255"/>
    </location>
</feature>
<feature type="region of interest" description="Disordered" evidence="7">
    <location>
        <begin position="334"/>
        <end position="359"/>
    </location>
</feature>
<feature type="region of interest" description="Essential for loading of BUBR1, MAD1L1 and MAD2L1 to kinetochores" evidence="1">
    <location>
        <begin position="446"/>
        <end position="464"/>
    </location>
</feature>
<feature type="short sequence motif" description="Nuclear localization signal" evidence="3">
    <location>
        <begin position="58"/>
        <end position="65"/>
    </location>
</feature>
<feature type="short sequence motif" description="KEN box 1" evidence="1">
    <location>
        <begin position="522"/>
        <end position="524"/>
    </location>
</feature>
<feature type="short sequence motif" description="KEN box 2" evidence="1">
    <location>
        <begin position="611"/>
        <end position="613"/>
    </location>
</feature>
<feature type="compositionally biased region" description="Polar residues" evidence="7">
    <location>
        <begin position="334"/>
        <end position="349"/>
    </location>
</feature>
<feature type="active site" description="Proton acceptor" evidence="4 6">
    <location>
        <position position="891"/>
    </location>
</feature>
<feature type="binding site" evidence="4">
    <location>
        <begin position="767"/>
        <end position="775"/>
    </location>
    <ligand>
        <name>ATP</name>
        <dbReference type="ChEBI" id="CHEBI:30616"/>
    </ligand>
</feature>
<feature type="binding site" evidence="4">
    <location>
        <position position="795"/>
    </location>
    <ligand>
        <name>ATP</name>
        <dbReference type="ChEBI" id="CHEBI:30616"/>
    </ligand>
</feature>
<feature type="modified residue" description="Phosphoserine" evidence="2">
    <location>
        <position position="306"/>
    </location>
</feature>
<feature type="modified residue" description="Phosphoserine" evidence="2">
    <location>
        <position position="313"/>
    </location>
</feature>
<feature type="modified residue" description="Phosphoserine" evidence="2">
    <location>
        <position position="330"/>
    </location>
</feature>
<feature type="modified residue" description="Phosphoserine" evidence="2">
    <location>
        <position position="512"/>
    </location>
</feature>
<feature type="modified residue" description="Phosphoserine" evidence="2">
    <location>
        <position position="550"/>
    </location>
</feature>
<feature type="modified residue" description="Phosphoserine" evidence="2">
    <location>
        <position position="579"/>
    </location>
</feature>
<feature type="modified residue" description="Phosphoserine" evidence="2">
    <location>
        <position position="582"/>
    </location>
</feature>
<feature type="modified residue" description="Phosphothreonine; by CDK1" evidence="2">
    <location>
        <position position="595"/>
    </location>
</feature>
<feature type="modified residue" description="Phosphoserine" evidence="2">
    <location>
        <position position="648"/>
    </location>
</feature>
<feature type="sequence conflict" description="In Ref. 2; AAC53533." evidence="11" ref="2">
    <original>K</original>
    <variation>R</variation>
    <location>
        <position position="187"/>
    </location>
</feature>
<protein>
    <recommendedName>
        <fullName>Mitotic checkpoint serine/threonine-protein kinase BUB1</fullName>
        <shortName>mBUB1</shortName>
        <ecNumber>2.7.11.1</ecNumber>
    </recommendedName>
    <alternativeName>
        <fullName>BUB1A</fullName>
    </alternativeName>
</protein>
<accession>O08901</accession>
<accession>O09007</accession>
<comment type="function">
    <text evidence="2 8 9 10">Serine/threonine-protein kinase that performs 2 crucial functions during mitosis: it is essential for spindle-assembly checkpoint signaling and for correct chromosome alignment. Has a key role in the assembly of checkpoint proteins at the kinetochore, being required for the subsequent localization of CENPF, BUB1B, CENPE and MAD2L1. Required for the kinetochore localization of PLK1. Required for centromeric enrichment of AUKRB in prometaphase. Plays an important role in defining SGO1 localization and thereby affects sister chromatid cohesion. Promotes the centromeric localization of TOP2A (By similarity). Acts as a substrate for anaphase-promoting complex or cyclosome (APC/C) in complex with its activator CDH1 (APC/C-Cdh1). Necessary for ensuring proper chromosome segregation and binding to BUB3 is essential for this function. Can regulate chromosome segregation in a kinetochore-independent manner. Can phosphorylate BUB3. The BUB1-BUB3 complex plays a role in the inhibition of APC/C when spindle-assembly checkpoint is activated and inhibits the ubiquitin ligase activity of APC/C by phosphorylating its activator CDC20. This complex can also phosphorylate MAD1L1. Kinase activity is essential for inhibition of APC/CCDC20 and for chromosome alignment but does not play a major role in the spindle-assembly checkpoint activity. Mediates cell death in response to chromosome missegregation and acts to suppress spontaneous tumorigenesis. Essential during early and later stages of embryonic development. Necessary for postimplantation embryogenesis and proliferation of primary embryonic fibroblasts and plays an important role in spermatogenesis and fertility.</text>
</comment>
<comment type="catalytic activity">
    <reaction>
        <text>L-seryl-[protein] + ATP = O-phospho-L-seryl-[protein] + ADP + H(+)</text>
        <dbReference type="Rhea" id="RHEA:17989"/>
        <dbReference type="Rhea" id="RHEA-COMP:9863"/>
        <dbReference type="Rhea" id="RHEA-COMP:11604"/>
        <dbReference type="ChEBI" id="CHEBI:15378"/>
        <dbReference type="ChEBI" id="CHEBI:29999"/>
        <dbReference type="ChEBI" id="CHEBI:30616"/>
        <dbReference type="ChEBI" id="CHEBI:83421"/>
        <dbReference type="ChEBI" id="CHEBI:456216"/>
        <dbReference type="EC" id="2.7.11.1"/>
    </reaction>
</comment>
<comment type="catalytic activity">
    <reaction>
        <text>L-threonyl-[protein] + ATP = O-phospho-L-threonyl-[protein] + ADP + H(+)</text>
        <dbReference type="Rhea" id="RHEA:46608"/>
        <dbReference type="Rhea" id="RHEA-COMP:11060"/>
        <dbReference type="Rhea" id="RHEA-COMP:11605"/>
        <dbReference type="ChEBI" id="CHEBI:15378"/>
        <dbReference type="ChEBI" id="CHEBI:30013"/>
        <dbReference type="ChEBI" id="CHEBI:30616"/>
        <dbReference type="ChEBI" id="CHEBI:61977"/>
        <dbReference type="ChEBI" id="CHEBI:456216"/>
        <dbReference type="EC" id="2.7.11.1"/>
    </reaction>
</comment>
<comment type="activity regulation">
    <text evidence="1">Autophosphorylated when the cells enters mitosis.</text>
</comment>
<comment type="subunit">
    <text evidence="1">Interacts with BUB3 and KNL1. Interacts (when phosphorylated) with PLK1. The BUB1-BUB3 complex interacts with MAD1L1 (By similarity).</text>
</comment>
<comment type="subcellular location">
    <subcellularLocation>
        <location>Nucleus</location>
    </subcellularLocation>
    <subcellularLocation>
        <location>Chromosome</location>
        <location>Centromere</location>
        <location>Kinetochore</location>
    </subcellularLocation>
    <text evidence="1">Nuclear in interphase cells. Accumulates gradually during G1 and S phase of the cell cycle, peaks at G2/M, and drops dramatically after mitosis. Localizes to the outer kinetochore. Kinetochore localization is required for normal mitotic timing and checkpoint response to spindle damage and occurs very early in prophase. AURKB, KNL1 and INCENP are required for kinetochore localization (By similarity).</text>
</comment>
<comment type="tissue specificity">
    <text evidence="8">Highly expressed in testis. Weakly expressed in spleen and lung.</text>
</comment>
<comment type="domain">
    <text evidence="1">The KEN box is required for its ubiquitination and degradation.</text>
</comment>
<comment type="domain">
    <text>BUB1 N-terminal domain directs kinetochore localization and binding to BUB3.</text>
</comment>
<comment type="PTM">
    <text evidence="1">Upon spindle-assembly checkpoint activation it is hyperphosphorylated and its kinase activity toward CDC20 is stimulated. Phosphorylation at Thr-595 is required for interaction with PLK1, phosphorylation at this site probably creates a binding site for the POLO-box domain of PLK1, thus enhancing the PLK1-BUB1 interaction (By similarity).</text>
</comment>
<comment type="PTM">
    <text evidence="1">Ubiquitinated and degraded during mitotic exit by APC/C-Cdh1.</text>
</comment>
<comment type="disruption phenotype">
    <text evidence="9">Early embryonic lethality.</text>
</comment>
<comment type="similarity">
    <text evidence="4">Belongs to the protein kinase superfamily. Ser/Thr protein kinase family. BUB1 subfamily.</text>
</comment>
<comment type="sequence caution" evidence="11">
    <conflict type="erroneous initiation">
        <sequence resource="EMBL-CDS" id="AAC53533"/>
    </conflict>
</comment>
<dbReference type="EC" id="2.7.11.1"/>
<dbReference type="EMBL" id="AF002823">
    <property type="protein sequence ID" value="AAC53226.1"/>
    <property type="molecule type" value="mRNA"/>
</dbReference>
<dbReference type="EMBL" id="U89795">
    <property type="protein sequence ID" value="AAC53533.1"/>
    <property type="status" value="ALT_INIT"/>
    <property type="molecule type" value="mRNA"/>
</dbReference>
<dbReference type="PIR" id="T30178">
    <property type="entry name" value="T30178"/>
</dbReference>
<dbReference type="PIR" id="T31004">
    <property type="entry name" value="T31004"/>
</dbReference>
<dbReference type="RefSeq" id="NP_001106650.1">
    <property type="nucleotide sequence ID" value="NM_001113179.1"/>
</dbReference>
<dbReference type="RefSeq" id="NP_033902.2">
    <property type="nucleotide sequence ID" value="NM_009772.2"/>
</dbReference>
<dbReference type="SMR" id="O08901"/>
<dbReference type="BioGRID" id="198404">
    <property type="interactions" value="63"/>
</dbReference>
<dbReference type="FunCoup" id="O08901">
    <property type="interactions" value="1706"/>
</dbReference>
<dbReference type="IntAct" id="O08901">
    <property type="interactions" value="15"/>
</dbReference>
<dbReference type="STRING" id="10090.ENSMUSP00000028858"/>
<dbReference type="GlyGen" id="O08901">
    <property type="glycosylation" value="1 site, 1 O-linked glycan (1 site)"/>
</dbReference>
<dbReference type="iPTMnet" id="O08901"/>
<dbReference type="PhosphoSitePlus" id="O08901"/>
<dbReference type="SwissPalm" id="O08901"/>
<dbReference type="PaxDb" id="10090-ENSMUSP00000028858"/>
<dbReference type="ProteomicsDB" id="273779"/>
<dbReference type="Pumba" id="O08901"/>
<dbReference type="DNASU" id="12235"/>
<dbReference type="GeneID" id="12235"/>
<dbReference type="KEGG" id="mmu:12235"/>
<dbReference type="UCSC" id="uc008mgd.2">
    <property type="organism name" value="mouse"/>
</dbReference>
<dbReference type="AGR" id="MGI:1100510"/>
<dbReference type="CTD" id="699"/>
<dbReference type="MGI" id="MGI:1100510">
    <property type="gene designation" value="Bub1"/>
</dbReference>
<dbReference type="eggNOG" id="KOG1166">
    <property type="taxonomic scope" value="Eukaryota"/>
</dbReference>
<dbReference type="InParanoid" id="O08901"/>
<dbReference type="OrthoDB" id="248495at2759"/>
<dbReference type="BRENDA" id="2.7.11.1">
    <property type="organism ID" value="3474"/>
</dbReference>
<dbReference type="Reactome" id="R-MMU-141444">
    <property type="pathway name" value="Amplification of signal from unattached kinetochores via a MAD2 inhibitory signal"/>
</dbReference>
<dbReference type="Reactome" id="R-MMU-2467813">
    <property type="pathway name" value="Separation of Sister Chromatids"/>
</dbReference>
<dbReference type="Reactome" id="R-MMU-2500257">
    <property type="pathway name" value="Resolution of Sister Chromatid Cohesion"/>
</dbReference>
<dbReference type="Reactome" id="R-MMU-5663220">
    <property type="pathway name" value="RHO GTPases Activate Formins"/>
</dbReference>
<dbReference type="Reactome" id="R-MMU-68877">
    <property type="pathway name" value="Mitotic Prometaphase"/>
</dbReference>
<dbReference type="Reactome" id="R-MMU-9648025">
    <property type="pathway name" value="EML4 and NUDC in mitotic spindle formation"/>
</dbReference>
<dbReference type="BioGRID-ORCS" id="12235">
    <property type="hits" value="15 hits in 80 CRISPR screens"/>
</dbReference>
<dbReference type="ChiTaRS" id="Bub1">
    <property type="organism name" value="mouse"/>
</dbReference>
<dbReference type="PRO" id="PR:O08901"/>
<dbReference type="Proteomes" id="UP000000589">
    <property type="component" value="Unplaced"/>
</dbReference>
<dbReference type="RNAct" id="O08901">
    <property type="molecule type" value="protein"/>
</dbReference>
<dbReference type="GO" id="GO:0000775">
    <property type="term" value="C:chromosome, centromeric region"/>
    <property type="evidence" value="ECO:0000314"/>
    <property type="project" value="MGI"/>
</dbReference>
<dbReference type="GO" id="GO:0000779">
    <property type="term" value="C:condensed chromosome, centromeric region"/>
    <property type="evidence" value="ECO:0000314"/>
    <property type="project" value="MGI"/>
</dbReference>
<dbReference type="GO" id="GO:0000776">
    <property type="term" value="C:kinetochore"/>
    <property type="evidence" value="ECO:0000314"/>
    <property type="project" value="MGI"/>
</dbReference>
<dbReference type="GO" id="GO:0005634">
    <property type="term" value="C:nucleus"/>
    <property type="evidence" value="ECO:0007669"/>
    <property type="project" value="UniProtKB-SubCell"/>
</dbReference>
<dbReference type="GO" id="GO:0000940">
    <property type="term" value="C:outer kinetochore"/>
    <property type="evidence" value="ECO:0000250"/>
    <property type="project" value="UniProtKB"/>
</dbReference>
<dbReference type="GO" id="GO:0005524">
    <property type="term" value="F:ATP binding"/>
    <property type="evidence" value="ECO:0007669"/>
    <property type="project" value="UniProtKB-KW"/>
</dbReference>
<dbReference type="GO" id="GO:0140995">
    <property type="term" value="F:histone H2A kinase activity"/>
    <property type="evidence" value="ECO:0000250"/>
    <property type="project" value="UniProtKB"/>
</dbReference>
<dbReference type="GO" id="GO:0004672">
    <property type="term" value="F:protein kinase activity"/>
    <property type="evidence" value="ECO:0000250"/>
    <property type="project" value="UniProtKB"/>
</dbReference>
<dbReference type="GO" id="GO:0106310">
    <property type="term" value="F:protein serine kinase activity"/>
    <property type="evidence" value="ECO:0007669"/>
    <property type="project" value="RHEA"/>
</dbReference>
<dbReference type="GO" id="GO:0004674">
    <property type="term" value="F:protein serine/threonine kinase activity"/>
    <property type="evidence" value="ECO:0007669"/>
    <property type="project" value="UniProtKB-KW"/>
</dbReference>
<dbReference type="GO" id="GO:0051301">
    <property type="term" value="P:cell division"/>
    <property type="evidence" value="ECO:0007669"/>
    <property type="project" value="UniProtKB-KW"/>
</dbReference>
<dbReference type="GO" id="GO:0007059">
    <property type="term" value="P:chromosome segregation"/>
    <property type="evidence" value="ECO:0000315"/>
    <property type="project" value="MGI"/>
</dbReference>
<dbReference type="GO" id="GO:0097193">
    <property type="term" value="P:intrinsic apoptotic signaling pathway"/>
    <property type="evidence" value="ECO:0000315"/>
    <property type="project" value="MGI"/>
</dbReference>
<dbReference type="GO" id="GO:0007094">
    <property type="term" value="P:mitotic spindle assembly checkpoint signaling"/>
    <property type="evidence" value="ECO:0000250"/>
    <property type="project" value="UniProtKB"/>
</dbReference>
<dbReference type="GO" id="GO:2001244">
    <property type="term" value="P:positive regulation of intrinsic apoptotic signaling pathway"/>
    <property type="evidence" value="ECO:0000315"/>
    <property type="project" value="MGI"/>
</dbReference>
<dbReference type="GO" id="GO:0007063">
    <property type="term" value="P:regulation of sister chromatid cohesion"/>
    <property type="evidence" value="ECO:0000250"/>
    <property type="project" value="UniProtKB"/>
</dbReference>
<dbReference type="FunFam" id="1.10.510.10:FF:000390">
    <property type="entry name" value="Mitotic checkpoint serine/threonine-protein kinase BUB1"/>
    <property type="match status" value="1"/>
</dbReference>
<dbReference type="FunFam" id="1.25.40.430:FF:000001">
    <property type="entry name" value="Mitotic checkpoint serine/threonine-protein kinase BUB1"/>
    <property type="match status" value="1"/>
</dbReference>
<dbReference type="Gene3D" id="1.25.40.430">
    <property type="match status" value="1"/>
</dbReference>
<dbReference type="Gene3D" id="6.10.130.20">
    <property type="match status" value="1"/>
</dbReference>
<dbReference type="Gene3D" id="1.10.510.10">
    <property type="entry name" value="Transferase(Phosphotransferase) domain 1"/>
    <property type="match status" value="1"/>
</dbReference>
<dbReference type="InterPro" id="IPR015661">
    <property type="entry name" value="Bub1/Mad3"/>
</dbReference>
<dbReference type="InterPro" id="IPR011009">
    <property type="entry name" value="Kinase-like_dom_sf"/>
</dbReference>
<dbReference type="InterPro" id="IPR013212">
    <property type="entry name" value="Mad3/Bub1_I"/>
</dbReference>
<dbReference type="InterPro" id="IPR000719">
    <property type="entry name" value="Prot_kinase_dom"/>
</dbReference>
<dbReference type="InterPro" id="IPR017441">
    <property type="entry name" value="Protein_kinase_ATP_BS"/>
</dbReference>
<dbReference type="InterPro" id="IPR008271">
    <property type="entry name" value="Ser/Thr_kinase_AS"/>
</dbReference>
<dbReference type="PANTHER" id="PTHR14030">
    <property type="entry name" value="MITOTIC CHECKPOINT SERINE/THREONINE-PROTEIN KINASE BUB1"/>
    <property type="match status" value="1"/>
</dbReference>
<dbReference type="PANTHER" id="PTHR14030:SF26">
    <property type="entry name" value="MITOTIC CHECKPOINT SERINE_THREONINE-PROTEIN KINASE BUB1"/>
    <property type="match status" value="1"/>
</dbReference>
<dbReference type="Pfam" id="PF08311">
    <property type="entry name" value="Mad3_BUB1_I"/>
    <property type="match status" value="1"/>
</dbReference>
<dbReference type="Pfam" id="PF00069">
    <property type="entry name" value="Pkinase"/>
    <property type="match status" value="1"/>
</dbReference>
<dbReference type="SMART" id="SM00777">
    <property type="entry name" value="Mad3_BUB1_I"/>
    <property type="match status" value="1"/>
</dbReference>
<dbReference type="SMART" id="SM00220">
    <property type="entry name" value="S_TKc"/>
    <property type="match status" value="1"/>
</dbReference>
<dbReference type="SUPFAM" id="SSF56112">
    <property type="entry name" value="Protein kinase-like (PK-like)"/>
    <property type="match status" value="1"/>
</dbReference>
<dbReference type="PROSITE" id="PS51489">
    <property type="entry name" value="BUB1_N"/>
    <property type="match status" value="1"/>
</dbReference>
<dbReference type="PROSITE" id="PS00107">
    <property type="entry name" value="PROTEIN_KINASE_ATP"/>
    <property type="match status" value="1"/>
</dbReference>
<dbReference type="PROSITE" id="PS50011">
    <property type="entry name" value="PROTEIN_KINASE_DOM"/>
    <property type="match status" value="1"/>
</dbReference>
<dbReference type="PROSITE" id="PS00108">
    <property type="entry name" value="PROTEIN_KINASE_ST"/>
    <property type="match status" value="1"/>
</dbReference>
<sequence length="1058" mass="119563">MDNLENVFRMFEAHMQSYTGNDPLGEWESFIKWVEENFPDNKEYLMTLLEHLMKEFLHKKNYHNDSRFINYCLKFAEYNSDRHQFFEFLYNQGIGTKSSYIYMSWAGHLEAQGELQHASAIFQTGIHNEAEPKELLQQQYRLFQARLTGIHLPAQATTSEPLHSAQILNQVMMTNSSPEKNSACVPKSQGSECSGVASSTCDEKSNMEQRVIMISKSECSVSSSVAPKPEAQQVMYCKEKLIRGDSEFSFEELRAQKYNQRKKHEQWVSEDRNYMKRKEANAFEEQLLKQKMDELHKKLHQVVELSHKDLPASENRPDVSLVCVGQNTCSQQELRGPSLSSISHQTSESSGEKPQEEPSVPLMVNAVNSTLLFPAANLPALPVPVSGQSLTDSRCVNQSVHEFMPQCGPETKEVCETNKVASINDFHTTPNTSLGMVQGTPCKVQPSPTVHTKEALGFIMDMFQAPTLPDISDDKDEWPSLDQNEDAFEAQFQKNAVSSGDWGVKKIMTLSSAFPIFEDGNKENYGLPQPKNKPLGARTFGERSLSKYSSRSNEMPHTDEFMDDSTVCGIRCNKTLAPSPKSIGDFTSAAQLSSTPFHKFPADLVQIPEDKENVVATQYTHMALDSCKENIVDLSKGRKLGPIQEKISASLPCPSQPATGGLFTQEAVFGLEAFKCTGIDHATVEDLSDANAGLQVECVQTLGNVNAPSFTVENPWDDELILKLLSGLSKPVTSYSNTFEWQSKLPAIKTKTEYQLGSLLVYVNHLLGEGAFAQVFEAIHGDVRNAKSEQKCILKVQRPANSWEFYIGMQLMERLKPEVHHMFIKFYSAHLFKNGSILVGELYSYGTLLNVINLYKNTSEKVMPQALVLTFAIRMLYMVEQVHSCEIIHGDIKPDNFILGHRFLEQADEDLATGLALIDLGQSIDMKLFPKGTVFTGKCETSGFQCPEMLSNKPWNYQIDYFGVAATIYCMLFGSYMKVKNEGGVWKPEGLFRRLPHLDMWEEFFHIMLNIPDCHNLPSLDFLRQNMKKLLEQQYSNKIKTLRNRLIVMLSEYKRSRK</sequence>
<name>BUB1_MOUSE</name>
<reference key="1">
    <citation type="journal article" date="1997" name="Cell">
        <title>Kinetochore localization of murine Bub1 is required for normal mitotic timing and checkpoint response to spindle damage.</title>
        <authorList>
            <person name="Taylor S.S."/>
            <person name="McKeon F."/>
        </authorList>
    </citation>
    <scope>NUCLEOTIDE SEQUENCE [MRNA]</scope>
</reference>
<reference key="2">
    <citation type="journal article" date="1997" name="Genomics">
        <title>Mammalian BUB1 protein kinases: map positions and in vivo expression.</title>
        <authorList>
            <person name="Pangilinan F."/>
            <person name="Li Q."/>
            <person name="Weaver T."/>
            <person name="Lewis B.C."/>
            <person name="Dang C.V."/>
            <person name="Spencer F."/>
        </authorList>
    </citation>
    <scope>NUCLEOTIDE SEQUENCE [MRNA]</scope>
    <source>
        <strain>C57BL/6J</strain>
    </source>
</reference>
<reference key="3">
    <citation type="journal article" date="2007" name="Dev. Cell">
        <title>Bub1 maintains centromeric cohesion by activation of the spindle checkpoint.</title>
        <authorList>
            <person name="Perera D."/>
            <person name="Tilston V."/>
            <person name="Hopwood J.A."/>
            <person name="Barchi M."/>
            <person name="Boot-Handford R.P."/>
            <person name="Taylor S.S."/>
        </authorList>
    </citation>
    <scope>FUNCTION</scope>
    <scope>TISSUE SPECIFICITY</scope>
</reference>
<reference key="4">
    <citation type="journal article" date="2007" name="J. Cell Biol.">
        <title>Bub1 mediates cell death in response to chromosome missegregation and acts to suppress spontaneous tumorigenesis.</title>
        <authorList>
            <person name="Jeganathan K."/>
            <person name="Malureanu L."/>
            <person name="Baker D.J."/>
            <person name="Abraham S.C."/>
            <person name="van Deursen J.M."/>
        </authorList>
    </citation>
    <scope>FUNCTION</scope>
    <scope>DISRUPTION PHENOTYPE</scope>
</reference>
<reference key="5">
    <citation type="journal article" date="2009" name="BMC Res. Notes">
        <title>Inactivating the spindle checkpoint kinase Bub1 during embryonic development results in a global shutdown of proliferation.</title>
        <authorList>
            <person name="Tilston V."/>
            <person name="Taylor S.S."/>
            <person name="Perera D."/>
        </authorList>
    </citation>
    <scope>FUNCTION</scope>
</reference>
<reference key="6">
    <citation type="journal article" date="2010" name="Cell">
        <title>A tissue-specific atlas of mouse protein phosphorylation and expression.</title>
        <authorList>
            <person name="Huttlin E.L."/>
            <person name="Jedrychowski M.P."/>
            <person name="Elias J.E."/>
            <person name="Goswami T."/>
            <person name="Rad R."/>
            <person name="Beausoleil S.A."/>
            <person name="Villen J."/>
            <person name="Haas W."/>
            <person name="Sowa M.E."/>
            <person name="Gygi S.P."/>
        </authorList>
    </citation>
    <scope>IDENTIFICATION BY MASS SPECTROMETRY [LARGE SCALE ANALYSIS]</scope>
    <source>
        <tissue>Testis</tissue>
    </source>
</reference>
<gene>
    <name type="primary">Bub1</name>
</gene>
<proteinExistence type="evidence at protein level"/>
<evidence type="ECO:0000250" key="1"/>
<evidence type="ECO:0000250" key="2">
    <source>
        <dbReference type="UniProtKB" id="O43683"/>
    </source>
</evidence>
<evidence type="ECO:0000255" key="3"/>
<evidence type="ECO:0000255" key="4">
    <source>
        <dbReference type="PROSITE-ProRule" id="PRU00159"/>
    </source>
</evidence>
<evidence type="ECO:0000255" key="5">
    <source>
        <dbReference type="PROSITE-ProRule" id="PRU00822"/>
    </source>
</evidence>
<evidence type="ECO:0000255" key="6">
    <source>
        <dbReference type="PROSITE-ProRule" id="PRU10027"/>
    </source>
</evidence>
<evidence type="ECO:0000256" key="7">
    <source>
        <dbReference type="SAM" id="MobiDB-lite"/>
    </source>
</evidence>
<evidence type="ECO:0000269" key="8">
    <source>
    </source>
</evidence>
<evidence type="ECO:0000269" key="9">
    <source>
    </source>
</evidence>
<evidence type="ECO:0000269" key="10">
    <source>
    </source>
</evidence>
<evidence type="ECO:0000305" key="11"/>
<keyword id="KW-0053">Apoptosis</keyword>
<keyword id="KW-0067">ATP-binding</keyword>
<keyword id="KW-0131">Cell cycle</keyword>
<keyword id="KW-0132">Cell division</keyword>
<keyword id="KW-0137">Centromere</keyword>
<keyword id="KW-0158">Chromosome</keyword>
<keyword id="KW-0159">Chromosome partition</keyword>
<keyword id="KW-0418">Kinase</keyword>
<keyword id="KW-0995">Kinetochore</keyword>
<keyword id="KW-0498">Mitosis</keyword>
<keyword id="KW-0547">Nucleotide-binding</keyword>
<keyword id="KW-0539">Nucleus</keyword>
<keyword id="KW-0597">Phosphoprotein</keyword>
<keyword id="KW-1185">Reference proteome</keyword>
<keyword id="KW-0723">Serine/threonine-protein kinase</keyword>
<keyword id="KW-0808">Transferase</keyword>
<keyword id="KW-0832">Ubl conjugation</keyword>
<organism>
    <name type="scientific">Mus musculus</name>
    <name type="common">Mouse</name>
    <dbReference type="NCBI Taxonomy" id="10090"/>
    <lineage>
        <taxon>Eukaryota</taxon>
        <taxon>Metazoa</taxon>
        <taxon>Chordata</taxon>
        <taxon>Craniata</taxon>
        <taxon>Vertebrata</taxon>
        <taxon>Euteleostomi</taxon>
        <taxon>Mammalia</taxon>
        <taxon>Eutheria</taxon>
        <taxon>Euarchontoglires</taxon>
        <taxon>Glires</taxon>
        <taxon>Rodentia</taxon>
        <taxon>Myomorpha</taxon>
        <taxon>Muroidea</taxon>
        <taxon>Muridae</taxon>
        <taxon>Murinae</taxon>
        <taxon>Mus</taxon>
        <taxon>Mus</taxon>
    </lineage>
</organism>